<sequence>MIVPKISERFEHCRARQRCALIPFLTAGDPDLETTVAALKILDDHGADLIELGMPYSDPLADGPVIQAAATRALQRGTRLEAVLEMTTDLHQQLTAPLILFSYYNPIYHRGVSSFLKAVAQAGIKGLVIPDLPLEEAEPVLAETANLGLELTLLIAPTTSPERMRAIATASQGFIYLVSTTGVTGMRQEMASRVQELLHTLRQITPKPIGVGFGIASPEHARQVRDWGADAAIVGSAFVKRLAEPDQGLAAVAEFCQSLRTALDTP</sequence>
<comment type="function">
    <text evidence="1">The alpha subunit is responsible for the aldol cleavage of indoleglycerol phosphate to indole and glyceraldehyde 3-phosphate.</text>
</comment>
<comment type="catalytic activity">
    <reaction evidence="1">
        <text>(1S,2R)-1-C-(indol-3-yl)glycerol 3-phosphate + L-serine = D-glyceraldehyde 3-phosphate + L-tryptophan + H2O</text>
        <dbReference type="Rhea" id="RHEA:10532"/>
        <dbReference type="ChEBI" id="CHEBI:15377"/>
        <dbReference type="ChEBI" id="CHEBI:33384"/>
        <dbReference type="ChEBI" id="CHEBI:57912"/>
        <dbReference type="ChEBI" id="CHEBI:58866"/>
        <dbReference type="ChEBI" id="CHEBI:59776"/>
        <dbReference type="EC" id="4.2.1.20"/>
    </reaction>
</comment>
<comment type="pathway">
    <text evidence="1">Amino-acid biosynthesis; L-tryptophan biosynthesis; L-tryptophan from chorismate: step 5/5.</text>
</comment>
<comment type="subunit">
    <text evidence="1">Tetramer of two alpha and two beta chains.</text>
</comment>
<comment type="similarity">
    <text evidence="1">Belongs to the TrpA family.</text>
</comment>
<keyword id="KW-0028">Amino-acid biosynthesis</keyword>
<keyword id="KW-0057">Aromatic amino acid biosynthesis</keyword>
<keyword id="KW-0456">Lyase</keyword>
<keyword id="KW-1185">Reference proteome</keyword>
<keyword id="KW-0822">Tryptophan biosynthesis</keyword>
<feature type="chain" id="PRO_0000098859" description="Tryptophan synthase alpha chain">
    <location>
        <begin position="1"/>
        <end position="266"/>
    </location>
</feature>
<feature type="active site" description="Proton acceptor" evidence="1">
    <location>
        <position position="51"/>
    </location>
</feature>
<feature type="active site" description="Proton acceptor" evidence="1">
    <location>
        <position position="62"/>
    </location>
</feature>
<evidence type="ECO:0000255" key="1">
    <source>
        <dbReference type="HAMAP-Rule" id="MF_00131"/>
    </source>
</evidence>
<reference key="1">
    <citation type="journal article" date="2002" name="DNA Res.">
        <title>Complete genome structure of the thermophilic cyanobacterium Thermosynechococcus elongatus BP-1.</title>
        <authorList>
            <person name="Nakamura Y."/>
            <person name="Kaneko T."/>
            <person name="Sato S."/>
            <person name="Ikeuchi M."/>
            <person name="Katoh H."/>
            <person name="Sasamoto S."/>
            <person name="Watanabe A."/>
            <person name="Iriguchi M."/>
            <person name="Kawashima K."/>
            <person name="Kimura T."/>
            <person name="Kishida Y."/>
            <person name="Kiyokawa C."/>
            <person name="Kohara M."/>
            <person name="Matsumoto M."/>
            <person name="Matsuno A."/>
            <person name="Nakazaki N."/>
            <person name="Shimpo S."/>
            <person name="Sugimoto M."/>
            <person name="Takeuchi C."/>
            <person name="Yamada M."/>
            <person name="Tabata S."/>
        </authorList>
    </citation>
    <scope>NUCLEOTIDE SEQUENCE [LARGE SCALE GENOMIC DNA]</scope>
    <source>
        <strain>NIES-2133 / IAM M-273 / BP-1</strain>
    </source>
</reference>
<accession>Q8DLN9</accession>
<protein>
    <recommendedName>
        <fullName evidence="1">Tryptophan synthase alpha chain</fullName>
        <ecNumber evidence="1">4.2.1.20</ecNumber>
    </recommendedName>
</protein>
<dbReference type="EC" id="4.2.1.20" evidence="1"/>
<dbReference type="EMBL" id="BA000039">
    <property type="protein sequence ID" value="BAC07991.1"/>
    <property type="molecule type" value="Genomic_DNA"/>
</dbReference>
<dbReference type="RefSeq" id="NP_681229.1">
    <property type="nucleotide sequence ID" value="NC_004113.1"/>
</dbReference>
<dbReference type="SMR" id="Q8DLN9"/>
<dbReference type="STRING" id="197221.gene:10747028"/>
<dbReference type="EnsemblBacteria" id="BAC07991">
    <property type="protein sequence ID" value="BAC07991"/>
    <property type="gene ID" value="BAC07991"/>
</dbReference>
<dbReference type="KEGG" id="tel:tll0439"/>
<dbReference type="PATRIC" id="fig|197221.4.peg.463"/>
<dbReference type="eggNOG" id="COG0159">
    <property type="taxonomic scope" value="Bacteria"/>
</dbReference>
<dbReference type="UniPathway" id="UPA00035">
    <property type="reaction ID" value="UER00044"/>
</dbReference>
<dbReference type="Proteomes" id="UP000000440">
    <property type="component" value="Chromosome"/>
</dbReference>
<dbReference type="GO" id="GO:0005829">
    <property type="term" value="C:cytosol"/>
    <property type="evidence" value="ECO:0007669"/>
    <property type="project" value="TreeGrafter"/>
</dbReference>
<dbReference type="GO" id="GO:0004834">
    <property type="term" value="F:tryptophan synthase activity"/>
    <property type="evidence" value="ECO:0007669"/>
    <property type="project" value="UniProtKB-UniRule"/>
</dbReference>
<dbReference type="CDD" id="cd04724">
    <property type="entry name" value="Tryptophan_synthase_alpha"/>
    <property type="match status" value="1"/>
</dbReference>
<dbReference type="FunFam" id="3.20.20.70:FF:000037">
    <property type="entry name" value="Tryptophan synthase alpha chain"/>
    <property type="match status" value="1"/>
</dbReference>
<dbReference type="Gene3D" id="3.20.20.70">
    <property type="entry name" value="Aldolase class I"/>
    <property type="match status" value="1"/>
</dbReference>
<dbReference type="HAMAP" id="MF_00131">
    <property type="entry name" value="Trp_synth_alpha"/>
    <property type="match status" value="1"/>
</dbReference>
<dbReference type="InterPro" id="IPR013785">
    <property type="entry name" value="Aldolase_TIM"/>
</dbReference>
<dbReference type="InterPro" id="IPR011060">
    <property type="entry name" value="RibuloseP-bd_barrel"/>
</dbReference>
<dbReference type="InterPro" id="IPR018204">
    <property type="entry name" value="Trp_synthase_alpha_AS"/>
</dbReference>
<dbReference type="InterPro" id="IPR002028">
    <property type="entry name" value="Trp_synthase_suA"/>
</dbReference>
<dbReference type="NCBIfam" id="TIGR00262">
    <property type="entry name" value="trpA"/>
    <property type="match status" value="1"/>
</dbReference>
<dbReference type="PANTHER" id="PTHR43406:SF1">
    <property type="entry name" value="TRYPTOPHAN SYNTHASE ALPHA CHAIN, CHLOROPLASTIC"/>
    <property type="match status" value="1"/>
</dbReference>
<dbReference type="PANTHER" id="PTHR43406">
    <property type="entry name" value="TRYPTOPHAN SYNTHASE, ALPHA CHAIN"/>
    <property type="match status" value="1"/>
</dbReference>
<dbReference type="Pfam" id="PF00290">
    <property type="entry name" value="Trp_syntA"/>
    <property type="match status" value="1"/>
</dbReference>
<dbReference type="SUPFAM" id="SSF51366">
    <property type="entry name" value="Ribulose-phoshate binding barrel"/>
    <property type="match status" value="1"/>
</dbReference>
<dbReference type="PROSITE" id="PS00167">
    <property type="entry name" value="TRP_SYNTHASE_ALPHA"/>
    <property type="match status" value="1"/>
</dbReference>
<name>TRPA_THEVB</name>
<gene>
    <name evidence="1" type="primary">trpA</name>
    <name type="ordered locus">tll0439</name>
</gene>
<organism>
    <name type="scientific">Thermosynechococcus vestitus (strain NIES-2133 / IAM M-273 / BP-1)</name>
    <dbReference type="NCBI Taxonomy" id="197221"/>
    <lineage>
        <taxon>Bacteria</taxon>
        <taxon>Bacillati</taxon>
        <taxon>Cyanobacteriota</taxon>
        <taxon>Cyanophyceae</taxon>
        <taxon>Acaryochloridales</taxon>
        <taxon>Thermosynechococcaceae</taxon>
        <taxon>Thermosynechococcus</taxon>
    </lineage>
</organism>
<proteinExistence type="inferred from homology"/>